<accession>Q9HCH0</accession>
<accession>Q2TB26</accession>
<accession>Q71RH1</accession>
<accession>Q8N4W1</accession>
<accession>Q96HX2</accession>
<sequence>MSEAMDQPAGGPGNPRPGEGDDGSMEPGTCQELLHRLRELEAENSALAQANENQRETYERCLDEVANHVVQALLNQKDLREECIKLKKRVFDLERQNQMLSALFQQKLQLTTGSLPQIPLTPLQPPSEPPASPSLSSTEGPAAPLPLGHCAGQREVCWEQQLRPGGPGPPAAPPPALDALSPFLRKKAQILEVLRALEETDPLLLCSPATPWRPPGQGPGSPEPINGELCGPPQPEPSPWAPCLLLGPGNLGGLLHWERLLGGLGGEEDTGRPWGPSRGPPQAQGTSSGPNCAPGSSSSSSSDEAGDPNEAPSPDTLLGALARRQLNLGQLLEDTESYLQAFLAGAAGPLNGDHPGPGQSSSPDQAPPQLSKSKGLPKSAWGGGTPEAHRPGFGATSEGQGPLPFLSMFMGAGDAPLGSRPGHPHSSSQVKSKLQIGPPSPGEAQGPLLPSPARGLKFLKLPPTSEKSPSPGGPQLSPQLPRNSRIPCRNSGSDGSPSPLLARRGLGGGELSPEGAQGLPTSPSPCYTTPDSTQLRPPQSALSTTLSPGPVVSPCYENILDLSRSTFRGPSPEPPPSPLQVPTYPQLTLEVPQAPEVLRSPGVPPSPCLPESYPYGSPQEKSLDKAGSESPHPGRRTPGNSSKKPSQGSGRRPGDPGSTPLRDRLAALGKLKTGPEGALGSEKNGVPARPGTEKTRGPGKSGESAGDMVPSIHRPLEQLEAKGGIRGAVALGTNSLKQQEPGLMGDPGARVYSSHSMGARVDLEPVSPRSCLTKVELAKSRLAGALCPQVPRTPAKVPTSAPSLGKPNKSPHSSPTKLPSKSPTKVVPRPGAPLVTKESPKPDKGKGPPWADCGSTTAQSTPLVPGPTDPSQGPEGLAPHSAIEEKVMKGIEENVLRLQGQERAPGAEVKHRNTSSIASWFGLKKSKLPALNRRTEATKNKEGAGGGSPLRREVKMEARKLEAESLNISKLMAKAEDLRRALEEEKAYLSSRARPRPGGPAPGPNTGLGQVQGQLAGMYQGADTFMQQLLNRVDGKELPSKSWREPKPEYGDFQPVSSDPKSPWPACGPRNGLVGPLQGCGKPPGKPSSEPGRREEMPSEDSLAEPVPTSHFTACGSLTRTLDSGIGTFPPPDHGSSGTPSKNLPKTKPPRLDPPPGVPPARPPPLTKVPRRAHTLEREVPGIEELLVSGRHPSMPAFPALLPAAPGHRGHETCPDDPCEDPGPTPPVQLAKNWTFPNTRAAGSSSDPLMCPPRQLEGLPRTPMALPVDRKRSQEPSRPSPTPQGPPFGGSRTPSTSDMAEEGRVASGGPPGLETSESLSDSLYDSLSSCGSQG</sequence>
<evidence type="ECO:0000255" key="1"/>
<evidence type="ECO:0000256" key="2">
    <source>
        <dbReference type="SAM" id="MobiDB-lite"/>
    </source>
</evidence>
<evidence type="ECO:0000269" key="3">
    <source>
    </source>
</evidence>
<evidence type="ECO:0000269" key="4">
    <source>
    </source>
</evidence>
<evidence type="ECO:0000269" key="5">
    <source>
    </source>
</evidence>
<evidence type="ECO:0000303" key="6">
    <source>
    </source>
</evidence>
<evidence type="ECO:0000303" key="7">
    <source>
    </source>
</evidence>
<evidence type="ECO:0000303" key="8">
    <source>
    </source>
</evidence>
<evidence type="ECO:0000305" key="9"/>
<evidence type="ECO:0000312" key="10">
    <source>
        <dbReference type="HGNC" id="HGNC:29321"/>
    </source>
</evidence>
<evidence type="ECO:0007744" key="11">
    <source>
    </source>
</evidence>
<evidence type="ECO:0007744" key="12">
    <source>
    </source>
</evidence>
<evidence type="ECO:0007744" key="13">
    <source>
    </source>
</evidence>
<evidence type="ECO:0007744" key="14">
    <source>
    </source>
</evidence>
<evidence type="ECO:0007744" key="15">
    <source>
    </source>
</evidence>
<keyword id="KW-0025">Alternative splicing</keyword>
<keyword id="KW-0175">Coiled coil</keyword>
<keyword id="KW-0963">Cytoplasm</keyword>
<keyword id="KW-0206">Cytoskeleton</keyword>
<keyword id="KW-0493">Microtubule</keyword>
<keyword id="KW-0597">Phosphoprotein</keyword>
<keyword id="KW-1267">Proteomics identification</keyword>
<keyword id="KW-1185">Reference proteome</keyword>
<name>NCK5L_HUMAN</name>
<reference key="1">
    <citation type="journal article" date="2006" name="Nature">
        <title>The finished DNA sequence of human chromosome 12.</title>
        <authorList>
            <person name="Scherer S.E."/>
            <person name="Muzny D.M."/>
            <person name="Buhay C.J."/>
            <person name="Chen R."/>
            <person name="Cree A."/>
            <person name="Ding Y."/>
            <person name="Dugan-Rocha S."/>
            <person name="Gill R."/>
            <person name="Gunaratne P."/>
            <person name="Harris R.A."/>
            <person name="Hawes A.C."/>
            <person name="Hernandez J."/>
            <person name="Hodgson A.V."/>
            <person name="Hume J."/>
            <person name="Jackson A."/>
            <person name="Khan Z.M."/>
            <person name="Kovar-Smith C."/>
            <person name="Lewis L.R."/>
            <person name="Lozado R.J."/>
            <person name="Metzker M.L."/>
            <person name="Milosavljevic A."/>
            <person name="Miner G.R."/>
            <person name="Montgomery K.T."/>
            <person name="Morgan M.B."/>
            <person name="Nazareth L.V."/>
            <person name="Scott G."/>
            <person name="Sodergren E."/>
            <person name="Song X.-Z."/>
            <person name="Steffen D."/>
            <person name="Lovering R.C."/>
            <person name="Wheeler D.A."/>
            <person name="Worley K.C."/>
            <person name="Yuan Y."/>
            <person name="Zhang Z."/>
            <person name="Adams C.Q."/>
            <person name="Ansari-Lari M.A."/>
            <person name="Ayele M."/>
            <person name="Brown M.J."/>
            <person name="Chen G."/>
            <person name="Chen Z."/>
            <person name="Clerc-Blankenburg K.P."/>
            <person name="Davis C."/>
            <person name="Delgado O."/>
            <person name="Dinh H.H."/>
            <person name="Draper H."/>
            <person name="Gonzalez-Garay M.L."/>
            <person name="Havlak P."/>
            <person name="Jackson L.R."/>
            <person name="Jacob L.S."/>
            <person name="Kelly S.H."/>
            <person name="Li L."/>
            <person name="Li Z."/>
            <person name="Liu J."/>
            <person name="Liu W."/>
            <person name="Lu J."/>
            <person name="Maheshwari M."/>
            <person name="Nguyen B.-V."/>
            <person name="Okwuonu G.O."/>
            <person name="Pasternak S."/>
            <person name="Perez L.M."/>
            <person name="Plopper F.J.H."/>
            <person name="Santibanez J."/>
            <person name="Shen H."/>
            <person name="Tabor P.E."/>
            <person name="Verduzco D."/>
            <person name="Waldron L."/>
            <person name="Wang Q."/>
            <person name="Williams G.A."/>
            <person name="Zhang J."/>
            <person name="Zhou J."/>
            <person name="Allen C.C."/>
            <person name="Amin A.G."/>
            <person name="Anyalebechi V."/>
            <person name="Bailey M."/>
            <person name="Barbaria J.A."/>
            <person name="Bimage K.E."/>
            <person name="Bryant N.P."/>
            <person name="Burch P.E."/>
            <person name="Burkett C.E."/>
            <person name="Burrell K.L."/>
            <person name="Calderon E."/>
            <person name="Cardenas V."/>
            <person name="Carter K."/>
            <person name="Casias K."/>
            <person name="Cavazos I."/>
            <person name="Cavazos S.R."/>
            <person name="Ceasar H."/>
            <person name="Chacko J."/>
            <person name="Chan S.N."/>
            <person name="Chavez D."/>
            <person name="Christopoulos C."/>
            <person name="Chu J."/>
            <person name="Cockrell R."/>
            <person name="Cox C.D."/>
            <person name="Dang M."/>
            <person name="Dathorne S.R."/>
            <person name="David R."/>
            <person name="Davis C.M."/>
            <person name="Davy-Carroll L."/>
            <person name="Deshazo D.R."/>
            <person name="Donlin J.E."/>
            <person name="D'Souza L."/>
            <person name="Eaves K.A."/>
            <person name="Egan A."/>
            <person name="Emery-Cohen A.J."/>
            <person name="Escotto M."/>
            <person name="Flagg N."/>
            <person name="Forbes L.D."/>
            <person name="Gabisi A.M."/>
            <person name="Garza M."/>
            <person name="Hamilton C."/>
            <person name="Henderson N."/>
            <person name="Hernandez O."/>
            <person name="Hines S."/>
            <person name="Hogues M.E."/>
            <person name="Huang M."/>
            <person name="Idlebird D.G."/>
            <person name="Johnson R."/>
            <person name="Jolivet A."/>
            <person name="Jones S."/>
            <person name="Kagan R."/>
            <person name="King L.M."/>
            <person name="Leal B."/>
            <person name="Lebow H."/>
            <person name="Lee S."/>
            <person name="LeVan J.M."/>
            <person name="Lewis L.C."/>
            <person name="London P."/>
            <person name="Lorensuhewa L.M."/>
            <person name="Loulseged H."/>
            <person name="Lovett D.A."/>
            <person name="Lucier A."/>
            <person name="Lucier R.L."/>
            <person name="Ma J."/>
            <person name="Madu R.C."/>
            <person name="Mapua P."/>
            <person name="Martindale A.D."/>
            <person name="Martinez E."/>
            <person name="Massey E."/>
            <person name="Mawhiney S."/>
            <person name="Meador M.G."/>
            <person name="Mendez S."/>
            <person name="Mercado C."/>
            <person name="Mercado I.C."/>
            <person name="Merritt C.E."/>
            <person name="Miner Z.L."/>
            <person name="Minja E."/>
            <person name="Mitchell T."/>
            <person name="Mohabbat F."/>
            <person name="Mohabbat K."/>
            <person name="Montgomery B."/>
            <person name="Moore N."/>
            <person name="Morris S."/>
            <person name="Munidasa M."/>
            <person name="Ngo R.N."/>
            <person name="Nguyen N.B."/>
            <person name="Nickerson E."/>
            <person name="Nwaokelemeh O.O."/>
            <person name="Nwokenkwo S."/>
            <person name="Obregon M."/>
            <person name="Oguh M."/>
            <person name="Oragunye N."/>
            <person name="Oviedo R.J."/>
            <person name="Parish B.J."/>
            <person name="Parker D.N."/>
            <person name="Parrish J."/>
            <person name="Parks K.L."/>
            <person name="Paul H.A."/>
            <person name="Payton B.A."/>
            <person name="Perez A."/>
            <person name="Perrin W."/>
            <person name="Pickens A."/>
            <person name="Primus E.L."/>
            <person name="Pu L.-L."/>
            <person name="Puazo M."/>
            <person name="Quiles M.M."/>
            <person name="Quiroz J.B."/>
            <person name="Rabata D."/>
            <person name="Reeves K."/>
            <person name="Ruiz S.J."/>
            <person name="Shao H."/>
            <person name="Sisson I."/>
            <person name="Sonaike T."/>
            <person name="Sorelle R.P."/>
            <person name="Sutton A.E."/>
            <person name="Svatek A.F."/>
            <person name="Svetz L.A."/>
            <person name="Tamerisa K.S."/>
            <person name="Taylor T.R."/>
            <person name="Teague B."/>
            <person name="Thomas N."/>
            <person name="Thorn R.D."/>
            <person name="Trejos Z.Y."/>
            <person name="Trevino B.K."/>
            <person name="Ukegbu O.N."/>
            <person name="Urban J.B."/>
            <person name="Vasquez L.I."/>
            <person name="Vera V.A."/>
            <person name="Villasana D.M."/>
            <person name="Wang L."/>
            <person name="Ward-Moore S."/>
            <person name="Warren J.T."/>
            <person name="Wei X."/>
            <person name="White F."/>
            <person name="Williamson A.L."/>
            <person name="Wleczyk R."/>
            <person name="Wooden H.S."/>
            <person name="Wooden S.H."/>
            <person name="Yen J."/>
            <person name="Yoon L."/>
            <person name="Yoon V."/>
            <person name="Zorrilla S.E."/>
            <person name="Nelson D."/>
            <person name="Kucherlapati R."/>
            <person name="Weinstock G."/>
            <person name="Gibbs R.A."/>
        </authorList>
    </citation>
    <scope>NUCLEOTIDE SEQUENCE [LARGE SCALE GENOMIC DNA]</scope>
</reference>
<reference key="2">
    <citation type="journal article" date="2004" name="Genome Res.">
        <title>The status, quality, and expansion of the NIH full-length cDNA project: the Mammalian Gene Collection (MGC).</title>
        <authorList>
            <consortium name="The MGC Project Team"/>
        </authorList>
    </citation>
    <scope>NUCLEOTIDE SEQUENCE [LARGE SCALE MRNA] (ISOFORM 4)</scope>
    <scope>NUCLEOTIDE SEQUENCE [LARGE SCALE MRNA] OF 429-1334 (ISOFORM 1)</scope>
    <source>
        <tissue>Eye</tissue>
        <tissue>Skin</tissue>
    </source>
</reference>
<reference key="3">
    <citation type="journal article" date="2000" name="DNA Res.">
        <title>Prediction of the coding sequences of unidentified human genes. XVIII. The complete sequences of 100 new cDNA clones from brain which code for large proteins in vitro.</title>
        <authorList>
            <person name="Nagase T."/>
            <person name="Kikuno R."/>
            <person name="Nakayama M."/>
            <person name="Hirosawa M."/>
            <person name="Ohara O."/>
        </authorList>
    </citation>
    <scope>NUCLEOTIDE SEQUENCE [LARGE SCALE MRNA] OF 287-1334 (ISOFORM 2)</scope>
    <source>
        <tissue>Brain</tissue>
    </source>
</reference>
<reference key="4">
    <citation type="journal article" date="2004" name="Proc. Natl. Acad. Sci. U.S.A.">
        <title>Large-scale cDNA transfection screening for genes related to cancer development and progression.</title>
        <authorList>
            <person name="Wan D."/>
            <person name="Gong Y."/>
            <person name="Qin W."/>
            <person name="Zhang P."/>
            <person name="Li J."/>
            <person name="Wei L."/>
            <person name="Zhou X."/>
            <person name="Li H."/>
            <person name="Qiu X."/>
            <person name="Zhong F."/>
            <person name="He L."/>
            <person name="Yu J."/>
            <person name="Yao G."/>
            <person name="Jiang H."/>
            <person name="Qian L."/>
            <person name="Yu Y."/>
            <person name="Shu H."/>
            <person name="Chen X."/>
            <person name="Xu H."/>
            <person name="Guo M."/>
            <person name="Pan Z."/>
            <person name="Chen Y."/>
            <person name="Ge C."/>
            <person name="Yang S."/>
            <person name="Gu J."/>
        </authorList>
    </citation>
    <scope>NUCLEOTIDE SEQUENCE [LARGE SCALE MRNA] OF 831-1334 (ISOFORM 1)</scope>
</reference>
<reference key="5">
    <citation type="journal article" date="2006" name="Nat. Biotechnol.">
        <title>A probability-based approach for high-throughput protein phosphorylation analysis and site localization.</title>
        <authorList>
            <person name="Beausoleil S.A."/>
            <person name="Villen J."/>
            <person name="Gerber S.A."/>
            <person name="Rush J."/>
            <person name="Gygi S.P."/>
        </authorList>
    </citation>
    <scope>PHOSPHORYLATION [LARGE SCALE ANALYSIS] AT SER-440 AND SER-451</scope>
    <scope>IDENTIFICATION BY MASS SPECTROMETRY [LARGE SCALE ANALYSIS]</scope>
    <source>
        <tissue>Cervix carcinoma</tissue>
    </source>
</reference>
<reference key="6">
    <citation type="journal article" date="2008" name="Proc. Natl. Acad. Sci. U.S.A.">
        <title>A quantitative atlas of mitotic phosphorylation.</title>
        <authorList>
            <person name="Dephoure N."/>
            <person name="Zhou C."/>
            <person name="Villen J."/>
            <person name="Beausoleil S.A."/>
            <person name="Bakalarski C.E."/>
            <person name="Elledge S.J."/>
            <person name="Gygi S.P."/>
        </authorList>
    </citation>
    <scope>PHOSPHORYLATION [LARGE SCALE ANALYSIS] AT SER-477; SER-496; SER-498 AND SER-571</scope>
    <scope>IDENTIFICATION BY MASS SPECTROMETRY [LARGE SCALE ANALYSIS]</scope>
    <source>
        <tissue>Cervix carcinoma</tissue>
    </source>
</reference>
<reference key="7">
    <citation type="journal article" date="2009" name="Sci. Signal.">
        <title>Quantitative phosphoproteomic analysis of T cell receptor signaling reveals system-wide modulation of protein-protein interactions.</title>
        <authorList>
            <person name="Mayya V."/>
            <person name="Lundgren D.H."/>
            <person name="Hwang S.-I."/>
            <person name="Rezaul K."/>
            <person name="Wu L."/>
            <person name="Eng J.K."/>
            <person name="Rodionov V."/>
            <person name="Han D.K."/>
        </authorList>
    </citation>
    <scope>PHOSPHORYLATION [LARGE SCALE ANALYSIS] AT SER-440</scope>
    <scope>IDENTIFICATION BY MASS SPECTROMETRY [LARGE SCALE ANALYSIS]</scope>
    <source>
        <tissue>Leukemic T-cell</tissue>
    </source>
</reference>
<reference key="8">
    <citation type="journal article" date="2010" name="Sci. Signal.">
        <title>Quantitative phosphoproteomics reveals widespread full phosphorylation site occupancy during mitosis.</title>
        <authorList>
            <person name="Olsen J.V."/>
            <person name="Vermeulen M."/>
            <person name="Santamaria A."/>
            <person name="Kumar C."/>
            <person name="Miller M.L."/>
            <person name="Jensen L.J."/>
            <person name="Gnad F."/>
            <person name="Cox J."/>
            <person name="Jensen T.S."/>
            <person name="Nigg E.A."/>
            <person name="Brunak S."/>
            <person name="Mann M."/>
        </authorList>
    </citation>
    <scope>PHOSPHORYLATION [LARGE SCALE ANALYSIS] AT SER-440; SER-451; SER-493; SER-496 AND SER-498</scope>
    <scope>IDENTIFICATION BY MASS SPECTROMETRY [LARGE SCALE ANALYSIS]</scope>
    <source>
        <tissue>Cervix carcinoma</tissue>
    </source>
</reference>
<reference key="9">
    <citation type="journal article" date="2013" name="J. Proteome Res.">
        <title>Toward a comprehensive characterization of a human cancer cell phosphoproteome.</title>
        <authorList>
            <person name="Zhou H."/>
            <person name="Di Palma S."/>
            <person name="Preisinger C."/>
            <person name="Peng M."/>
            <person name="Polat A.N."/>
            <person name="Heck A.J."/>
            <person name="Mohammed S."/>
        </authorList>
    </citation>
    <scope>PHOSPHORYLATION [LARGE SCALE ANALYSIS] AT SER-440; SER-451; SER-477; SER-493; SER-498; THR-659; SER-767 AND SER-1194</scope>
    <scope>IDENTIFICATION BY MASS SPECTROMETRY [LARGE SCALE ANALYSIS]</scope>
    <source>
        <tissue>Cervix carcinoma</tissue>
        <tissue>Erythroleukemia</tissue>
    </source>
</reference>
<reference key="10">
    <citation type="journal article" date="2015" name="Biochem. Biophys. Res. Commun.">
        <title>Phosphorylation of the centrosomal protein, Cep169, by Cdk1 promotes its dissociation from centrosomes in mitosis.</title>
        <authorList>
            <person name="Mori Y."/>
            <person name="Inoue Y."/>
            <person name="Taniyama Y."/>
            <person name="Tanaka S."/>
            <person name="Terada Y."/>
        </authorList>
    </citation>
    <scope>PHOSPHORYLATION AT SER-440; SER-451; SER-470; SER-477; SER-571; SER-577 AND SER-767</scope>
    <scope>SUBCELLULAR LOCATION</scope>
</reference>
<reference key="11">
    <citation type="journal article" date="2015" name="Biochem. Biophys. Res. Commun.">
        <title>Microtubule-bundling activity of the centrosomal protein, Cep169, and its binding to microtubules.</title>
        <authorList>
            <person name="Mori Y."/>
            <person name="Taniyama Y."/>
            <person name="Tanaka S."/>
            <person name="Fukuchi H."/>
            <person name="Terada Y."/>
        </authorList>
    </citation>
    <scope>FUNCTION</scope>
    <scope>SUBUNIT</scope>
    <scope>SUBCELLULAR LOCATION</scope>
    <scope>INTERACTION WITH BETA-TUBULIN</scope>
    <scope>MUTAGENESIS OF 486-ILE-PRO-487; 818-LEU-PRO-819 AND 928-PRO-LEU-929</scope>
    <scope>DOMAIN (S/T)X(I/L)P MOTIF</scope>
</reference>
<reference key="12">
    <citation type="journal article" date="2015" name="PLoS ONE">
        <title>Cep169, a novel microtubule plus-end-tracking centrosomal protein, binds to CDK5RAP2 and regulates microtubule stability.</title>
        <authorList>
            <person name="Mori Y."/>
            <person name="Inoue Y."/>
            <person name="Tanaka S."/>
            <person name="Doda S."/>
            <person name="Yamanaka S."/>
            <person name="Fukuchi H."/>
            <person name="Terada Y."/>
        </authorList>
    </citation>
    <scope>FUNCTION</scope>
    <scope>SUBCELLULAR LOCATION</scope>
    <scope>INTERACTION WITH CDK5RAP2 AND MAPRE1</scope>
    <scope>MUTAGENESIS OF 486-ILE-PRO-487; 818-LEU-PRO-819 AND 928-PRO-LEU-929</scope>
    <scope>DOMAIN (S/T)X(I/L)P MOTIF</scope>
</reference>
<proteinExistence type="evidence at protein level"/>
<gene>
    <name evidence="10" type="primary">NCKAP5L</name>
    <name evidence="8" type="synonym">CEP169</name>
    <name type="synonym">KIAA1602</name>
    <name type="ORF">FP1193</name>
</gene>
<comment type="function">
    <text evidence="3 4">Regulates microtubule organization and stabilization. Promotes microtubule growth and bundling formation and stabilizes microtubules by increasing intense acetylation of microtubules (PubMed:26482847, PubMed:26485573). Both tubulin-binding and homodimer formation are required for NCKAP5L-mediated microtubule bundle formation (PubMed:26485573).</text>
</comment>
<comment type="subunit">
    <text evidence="3 4">Homodimer (PubMed:26482847). Interacts with CDK5RAP2 (PubMed:26485573). Interacts with MAPRE1 (PubMed:26485573). Interacts with beta-tubulin (PubMed:26482847).</text>
</comment>
<comment type="subcellular location">
    <subcellularLocation>
        <location evidence="3 4 5">Cytoplasm</location>
        <location evidence="3 4 5">Cytoskeleton</location>
        <location evidence="3 4 5">Microtubule organizing center</location>
        <location evidence="3 4 5">Centrosome</location>
    </subcellularLocation>
    <text evidence="3 4 5">Localizes to microtubule plus ends (PubMed:26482847, PubMed:26485573). Associates with centrosomes during interphase, but dissociates from these structures from the onset of mitosis (PubMed:26549230).</text>
</comment>
<comment type="alternative products">
    <event type="alternative splicing"/>
    <isoform>
        <id>Q9HCH0-1</id>
        <name>1</name>
        <sequence type="displayed"/>
    </isoform>
    <isoform>
        <id>Q9HCH0-2</id>
        <name>2</name>
        <sequence type="described" ref="VSP_025678"/>
    </isoform>
    <isoform>
        <id>Q9HCH0-4</id>
        <name>4</name>
        <sequence type="described" ref="VSP_033818 VSP_033819"/>
    </isoform>
</comment>
<comment type="PTM">
    <text evidence="5">CDK1/Cyclin B-dependent phosphorylation mediates its dissociation from centrosomes during mitosis.</text>
</comment>
<comment type="miscellaneous">
    <molecule>Isoform 2</molecule>
    <text evidence="9">Dubious isoform produced through intron retention.</text>
</comment>
<comment type="miscellaneous">
    <molecule>Isoform 4</molecule>
    <text evidence="9">Dubious isoform produced through intron retention.</text>
</comment>
<comment type="sequence caution" evidence="9">
    <conflict type="miscellaneous discrepancy">
        <sequence resource="EMBL-CDS" id="AAH07998"/>
    </conflict>
    <text>Probable cloning artifact.</text>
</comment>
<comment type="sequence caution" evidence="9">
    <conflict type="frameshift">
        <sequence resource="EMBL-CDS" id="AAQ15202"/>
    </conflict>
</comment>
<feature type="chain" id="PRO_0000288447" description="Nck-associated protein 5-like">
    <location>
        <begin position="1"/>
        <end position="1334"/>
    </location>
</feature>
<feature type="region of interest" description="Mediates interaction with CDK5RAP2 and is required for homodimerization and microtubule bundle formation" evidence="3 4">
    <location>
        <begin position="1"/>
        <end position="139"/>
    </location>
</feature>
<feature type="region of interest" description="Disordered" evidence="2">
    <location>
        <begin position="1"/>
        <end position="28"/>
    </location>
</feature>
<feature type="region of interest" description="Disordered" evidence="2">
    <location>
        <begin position="115"/>
        <end position="146"/>
    </location>
</feature>
<feature type="region of interest" description="Disordered" evidence="2">
    <location>
        <begin position="210"/>
        <end position="234"/>
    </location>
</feature>
<feature type="region of interest" description="Disordered" evidence="2">
    <location>
        <begin position="266"/>
        <end position="316"/>
    </location>
</feature>
<feature type="region of interest" description="Disordered" evidence="2">
    <location>
        <begin position="349"/>
        <end position="711"/>
    </location>
</feature>
<feature type="region of interest" description="Mediates interaction with beta-tubulin and is required for microtubule bundle formation" evidence="3">
    <location>
        <begin position="750"/>
        <end position="1146"/>
    </location>
</feature>
<feature type="region of interest" description="Disordered" evidence="2">
    <location>
        <begin position="782"/>
        <end position="884"/>
    </location>
</feature>
<feature type="region of interest" description="Disordered" evidence="2">
    <location>
        <begin position="931"/>
        <end position="953"/>
    </location>
</feature>
<feature type="region of interest" description="Disordered" evidence="2">
    <location>
        <begin position="986"/>
        <end position="1015"/>
    </location>
</feature>
<feature type="region of interest" description="Disordered" evidence="2">
    <location>
        <begin position="1030"/>
        <end position="1183"/>
    </location>
</feature>
<feature type="region of interest" description="Disordered" evidence="2">
    <location>
        <begin position="1197"/>
        <end position="1334"/>
    </location>
</feature>
<feature type="coiled-coil region" evidence="1">
    <location>
        <begin position="28"/>
        <end position="106"/>
    </location>
</feature>
<feature type="coiled-coil region" evidence="1">
    <location>
        <begin position="956"/>
        <end position="994"/>
    </location>
</feature>
<feature type="short sequence motif" description="(S/T)X(I/L)P motif 1" evidence="3 4">
    <location>
        <begin position="484"/>
        <end position="487"/>
    </location>
</feature>
<feature type="short sequence motif" description="(S/T)X(I/L)P motif 2" evidence="3 4">
    <location>
        <begin position="816"/>
        <end position="819"/>
    </location>
</feature>
<feature type="short sequence motif" description="(S/T)X(I/L)P motif 3; required for interaction with MAPRE1" evidence="3 4">
    <location>
        <begin position="926"/>
        <end position="929"/>
    </location>
</feature>
<feature type="compositionally biased region" description="Pro residues" evidence="2">
    <location>
        <begin position="122"/>
        <end position="132"/>
    </location>
</feature>
<feature type="compositionally biased region" description="Polar residues" evidence="2">
    <location>
        <begin position="358"/>
        <end position="372"/>
    </location>
</feature>
<feature type="compositionally biased region" description="Low complexity" evidence="2">
    <location>
        <begin position="468"/>
        <end position="481"/>
    </location>
</feature>
<feature type="compositionally biased region" description="Polar residues" evidence="2">
    <location>
        <begin position="519"/>
        <end position="547"/>
    </location>
</feature>
<feature type="compositionally biased region" description="Polar residues" evidence="2">
    <location>
        <begin position="638"/>
        <end position="649"/>
    </location>
</feature>
<feature type="compositionally biased region" description="Low complexity" evidence="2">
    <location>
        <begin position="810"/>
        <end position="825"/>
    </location>
</feature>
<feature type="compositionally biased region" description="Basic and acidic residues" evidence="2">
    <location>
        <begin position="933"/>
        <end position="942"/>
    </location>
</feature>
<feature type="compositionally biased region" description="Basic and acidic residues" evidence="2">
    <location>
        <begin position="1033"/>
        <end position="1050"/>
    </location>
</feature>
<feature type="compositionally biased region" description="Low complexity" evidence="2">
    <location>
        <begin position="1079"/>
        <end position="1090"/>
    </location>
</feature>
<feature type="compositionally biased region" description="Polar residues" evidence="2">
    <location>
        <begin position="1110"/>
        <end position="1122"/>
    </location>
</feature>
<feature type="compositionally biased region" description="Pro residues" evidence="2">
    <location>
        <begin position="1152"/>
        <end position="1167"/>
    </location>
</feature>
<feature type="compositionally biased region" description="Low complexity" evidence="2">
    <location>
        <begin position="1197"/>
        <end position="1206"/>
    </location>
</feature>
<feature type="compositionally biased region" description="Polar residues" evidence="2">
    <location>
        <begin position="1235"/>
        <end position="1247"/>
    </location>
</feature>
<feature type="compositionally biased region" description="Low complexity" evidence="2">
    <location>
        <begin position="1313"/>
        <end position="1334"/>
    </location>
</feature>
<feature type="modified residue" description="Phosphoserine; by CDK1" evidence="5 11 13 14 15">
    <location>
        <position position="440"/>
    </location>
</feature>
<feature type="modified residue" description="Phosphoserine; by CDK1" evidence="5 11 14 15">
    <location>
        <position position="451"/>
    </location>
</feature>
<feature type="modified residue" description="Phosphoserine; by CDK1" evidence="5">
    <location>
        <position position="470"/>
    </location>
</feature>
<feature type="modified residue" description="Phosphoserine; by CDK1" evidence="5 12 15">
    <location>
        <position position="477"/>
    </location>
</feature>
<feature type="modified residue" description="Phosphoserine" evidence="14 15">
    <location>
        <position position="493"/>
    </location>
</feature>
<feature type="modified residue" description="Phosphoserine" evidence="12 14">
    <location>
        <position position="496"/>
    </location>
</feature>
<feature type="modified residue" description="Phosphoserine" evidence="12 14 15">
    <location>
        <position position="498"/>
    </location>
</feature>
<feature type="modified residue" description="Phosphoserine; by CDK1" evidence="5 12">
    <location>
        <position position="571"/>
    </location>
</feature>
<feature type="modified residue" description="Phosphoserine; by CDK1" evidence="5">
    <location>
        <position position="577"/>
    </location>
</feature>
<feature type="modified residue" description="Phosphothreonine" evidence="15">
    <location>
        <position position="659"/>
    </location>
</feature>
<feature type="modified residue" description="Phosphoserine; by CDK1" evidence="5 15">
    <location>
        <position position="767"/>
    </location>
</feature>
<feature type="modified residue" description="Phosphoserine" evidence="15">
    <location>
        <position position="1194"/>
    </location>
</feature>
<feature type="splice variant" id="VSP_033818" description="In isoform 4." evidence="7">
    <original>ANHVVQALLNQKDLREECIKLKKRVFDLERQNQMLSALFQQKLQLTT</original>
    <variation>CGSVVGLGGCGSSAPGRSWGQLMALPRGFLSPGCQPCGTGVAEPEGE</variation>
    <location>
        <begin position="66"/>
        <end position="112"/>
    </location>
</feature>
<feature type="splice variant" id="VSP_033819" description="In isoform 4." evidence="7">
    <location>
        <begin position="113"/>
        <end position="1334"/>
    </location>
</feature>
<feature type="splice variant" id="VSP_025678" description="In isoform 2." evidence="6">
    <original>ALPVDRKRSQEPSRPSPTPQGPPFGGSRTPSTSDMAEEGRVASGGPPGLETSESLSDSLYDSLSSCGSQG</original>
    <variation>VRIAAEERERTREQEGVMWGDQFLQ</variation>
    <location>
        <begin position="1265"/>
        <end position="1334"/>
    </location>
</feature>
<feature type="mutagenesis site" description="No decrease in localization to microtubule plus ends. Loss of interaction with MAPRE1 and localization to microtubule plus ends; when associated with 818-A-A-819 and 928-A-A-929." evidence="3 4">
    <original>IP</original>
    <variation>AA</variation>
    <location>
        <begin position="486"/>
        <end position="487"/>
    </location>
</feature>
<feature type="mutagenesis site" description="No decrease in localization to microtubule plus ends. Loss of interaction with MAPRE1 and localization to microtubule plus ends; when associated with 486-A-A-487 and 928-A-A-929." evidence="3 4">
    <original>LP</original>
    <variation>AA</variation>
    <location>
        <begin position="818"/>
        <end position="819"/>
    </location>
</feature>
<feature type="mutagenesis site" description="Loss of interaction with MAPRE1 and significantly reduced localization to microtubule plus ends. Loss of interaction with MAPRE1 and localization to microtubule plus ends; when associated with 486-A-A-487 and 818-A-A-819." evidence="3 4">
    <original>LP</original>
    <variation>AA</variation>
    <location>
        <begin position="928"/>
        <end position="929"/>
    </location>
</feature>
<feature type="sequence conflict" description="In Ref. 3; BAB13428." evidence="9" ref="3">
    <original>M</original>
    <variation>T</variation>
    <location>
        <position position="1097"/>
    </location>
</feature>
<organism>
    <name type="scientific">Homo sapiens</name>
    <name type="common">Human</name>
    <dbReference type="NCBI Taxonomy" id="9606"/>
    <lineage>
        <taxon>Eukaryota</taxon>
        <taxon>Metazoa</taxon>
        <taxon>Chordata</taxon>
        <taxon>Craniata</taxon>
        <taxon>Vertebrata</taxon>
        <taxon>Euteleostomi</taxon>
        <taxon>Mammalia</taxon>
        <taxon>Eutheria</taxon>
        <taxon>Euarchontoglires</taxon>
        <taxon>Primates</taxon>
        <taxon>Haplorrhini</taxon>
        <taxon>Catarrhini</taxon>
        <taxon>Hominidae</taxon>
        <taxon>Homo</taxon>
    </lineage>
</organism>
<protein>
    <recommendedName>
        <fullName>Nck-associated protein 5-like</fullName>
        <shortName evidence="9">NCKAP5-like</shortName>
    </recommendedName>
    <alternativeName>
        <fullName evidence="8">Centrosomal protein of 169 kDa</fullName>
        <shortName evidence="8">Cep169</shortName>
    </alternativeName>
</protein>
<dbReference type="EMBL" id="AC131157">
    <property type="status" value="NOT_ANNOTATED_CDS"/>
    <property type="molecule type" value="Genomic_DNA"/>
</dbReference>
<dbReference type="EMBL" id="BC007998">
    <property type="protein sequence ID" value="AAH07998.1"/>
    <property type="status" value="ALT_SEQ"/>
    <property type="molecule type" value="mRNA"/>
</dbReference>
<dbReference type="EMBL" id="BC033253">
    <property type="protein sequence ID" value="AAH33253.1"/>
    <property type="molecule type" value="mRNA"/>
</dbReference>
<dbReference type="EMBL" id="BC110599">
    <property type="protein sequence ID" value="AAI10600.1"/>
    <property type="molecule type" value="mRNA"/>
</dbReference>
<dbReference type="EMBL" id="AB046822">
    <property type="protein sequence ID" value="BAB13428.1"/>
    <property type="molecule type" value="mRNA"/>
</dbReference>
<dbReference type="EMBL" id="AF370366">
    <property type="protein sequence ID" value="AAQ15202.1"/>
    <property type="status" value="ALT_FRAME"/>
    <property type="molecule type" value="mRNA"/>
</dbReference>
<dbReference type="CCDS" id="CCDS41781.2">
    <molecule id="Q9HCH0-1"/>
</dbReference>
<dbReference type="RefSeq" id="NP_001032895.2">
    <molecule id="Q9HCH0-1"/>
    <property type="nucleotide sequence ID" value="NM_001037806.4"/>
</dbReference>
<dbReference type="RefSeq" id="NP_001354977.1">
    <molecule id="Q9HCH0-1"/>
    <property type="nucleotide sequence ID" value="NM_001368048.1"/>
</dbReference>
<dbReference type="RefSeq" id="XP_005269107.1">
    <molecule id="Q9HCH0-2"/>
    <property type="nucleotide sequence ID" value="XM_005269050.4"/>
</dbReference>
<dbReference type="RefSeq" id="XP_006719588.1">
    <molecule id="Q9HCH0-1"/>
    <property type="nucleotide sequence ID" value="XM_006719525.3"/>
</dbReference>
<dbReference type="RefSeq" id="XP_011536912.1">
    <property type="nucleotide sequence ID" value="XM_011538610.2"/>
</dbReference>
<dbReference type="RefSeq" id="XP_011536913.1">
    <molecule id="Q9HCH0-1"/>
    <property type="nucleotide sequence ID" value="XM_011538611.3"/>
</dbReference>
<dbReference type="RefSeq" id="XP_047285186.1">
    <molecule id="Q9HCH0-2"/>
    <property type="nucleotide sequence ID" value="XM_047429230.1"/>
</dbReference>
<dbReference type="RefSeq" id="XP_054228685.1">
    <molecule id="Q9HCH0-1"/>
    <property type="nucleotide sequence ID" value="XM_054372710.1"/>
</dbReference>
<dbReference type="RefSeq" id="XP_054228686.1">
    <molecule id="Q9HCH0-1"/>
    <property type="nucleotide sequence ID" value="XM_054372711.1"/>
</dbReference>
<dbReference type="RefSeq" id="XP_054228687.1">
    <molecule id="Q9HCH0-2"/>
    <property type="nucleotide sequence ID" value="XM_054372712.1"/>
</dbReference>
<dbReference type="RefSeq" id="XP_054228688.1">
    <molecule id="Q9HCH0-2"/>
    <property type="nucleotide sequence ID" value="XM_054372713.1"/>
</dbReference>
<dbReference type="SMR" id="Q9HCH0"/>
<dbReference type="BioGRID" id="121726">
    <property type="interactions" value="115"/>
</dbReference>
<dbReference type="FunCoup" id="Q9HCH0">
    <property type="interactions" value="566"/>
</dbReference>
<dbReference type="IntAct" id="Q9HCH0">
    <property type="interactions" value="48"/>
</dbReference>
<dbReference type="MINT" id="Q9HCH0"/>
<dbReference type="STRING" id="9606.ENSP00000337998"/>
<dbReference type="GlyGen" id="Q9HCH0">
    <property type="glycosylation" value="5 sites, 1 O-linked glycan (1 site)"/>
</dbReference>
<dbReference type="iPTMnet" id="Q9HCH0"/>
<dbReference type="PhosphoSitePlus" id="Q9HCH0"/>
<dbReference type="BioMuta" id="NCKAP5L"/>
<dbReference type="DMDM" id="156630840"/>
<dbReference type="jPOST" id="Q9HCH0"/>
<dbReference type="MassIVE" id="Q9HCH0"/>
<dbReference type="PaxDb" id="9606-ENSP00000337998"/>
<dbReference type="PeptideAtlas" id="Q9HCH0"/>
<dbReference type="ProteomicsDB" id="81713">
    <molecule id="Q9HCH0-1"/>
</dbReference>
<dbReference type="ProteomicsDB" id="81714">
    <molecule id="Q9HCH0-2"/>
</dbReference>
<dbReference type="ProteomicsDB" id="81716">
    <molecule id="Q9HCH0-4"/>
</dbReference>
<dbReference type="Pumba" id="Q9HCH0"/>
<dbReference type="Antibodypedia" id="49270">
    <property type="antibodies" value="26 antibodies from 14 providers"/>
</dbReference>
<dbReference type="DNASU" id="57701"/>
<dbReference type="Ensembl" id="ENST00000335999.7">
    <molecule id="Q9HCH0-1"/>
    <property type="protein sequence ID" value="ENSP00000337998.6"/>
    <property type="gene ID" value="ENSG00000167566.17"/>
</dbReference>
<dbReference type="GeneID" id="57701"/>
<dbReference type="KEGG" id="hsa:57701"/>
<dbReference type="MANE-Select" id="ENST00000335999.7">
    <property type="protein sequence ID" value="ENSP00000337998.6"/>
    <property type="RefSeq nucleotide sequence ID" value="NM_001037806.4"/>
    <property type="RefSeq protein sequence ID" value="NP_001032895.2"/>
</dbReference>
<dbReference type="UCSC" id="uc009zlk.2">
    <molecule id="Q9HCH0-1"/>
    <property type="organism name" value="human"/>
</dbReference>
<dbReference type="AGR" id="HGNC:29321"/>
<dbReference type="CTD" id="57701"/>
<dbReference type="DisGeNET" id="57701"/>
<dbReference type="GeneCards" id="NCKAP5L"/>
<dbReference type="HGNC" id="HGNC:29321">
    <property type="gene designation" value="NCKAP5L"/>
</dbReference>
<dbReference type="HPA" id="ENSG00000167566">
    <property type="expression patterns" value="Low tissue specificity"/>
</dbReference>
<dbReference type="MIM" id="615104">
    <property type="type" value="gene"/>
</dbReference>
<dbReference type="neXtProt" id="NX_Q9HCH0"/>
<dbReference type="OpenTargets" id="ENSG00000167566"/>
<dbReference type="PharmGKB" id="PA165513124"/>
<dbReference type="VEuPathDB" id="HostDB:ENSG00000167566"/>
<dbReference type="eggNOG" id="ENOG502RB0P">
    <property type="taxonomic scope" value="Eukaryota"/>
</dbReference>
<dbReference type="GeneTree" id="ENSGT00530000063607"/>
<dbReference type="HOGENOM" id="CLU_007601_0_0_1"/>
<dbReference type="InParanoid" id="Q9HCH0"/>
<dbReference type="OMA" id="SWPACGP"/>
<dbReference type="OrthoDB" id="8930856at2759"/>
<dbReference type="PAN-GO" id="Q9HCH0">
    <property type="GO annotations" value="3 GO annotations based on evolutionary models"/>
</dbReference>
<dbReference type="PhylomeDB" id="Q9HCH0"/>
<dbReference type="TreeFam" id="TF331208"/>
<dbReference type="PathwayCommons" id="Q9HCH0"/>
<dbReference type="SignaLink" id="Q9HCH0"/>
<dbReference type="BioGRID-ORCS" id="57701">
    <property type="hits" value="69 hits in 1151 CRISPR screens"/>
</dbReference>
<dbReference type="ChiTaRS" id="NCKAP5L">
    <property type="organism name" value="human"/>
</dbReference>
<dbReference type="GenomeRNAi" id="57701"/>
<dbReference type="Pharos" id="Q9HCH0">
    <property type="development level" value="Tdark"/>
</dbReference>
<dbReference type="PRO" id="PR:Q9HCH0"/>
<dbReference type="Proteomes" id="UP000005640">
    <property type="component" value="Chromosome 12"/>
</dbReference>
<dbReference type="RNAct" id="Q9HCH0">
    <property type="molecule type" value="protein"/>
</dbReference>
<dbReference type="Bgee" id="ENSG00000167566">
    <property type="expression patterns" value="Expressed in apex of heart and 114 other cell types or tissues"/>
</dbReference>
<dbReference type="ExpressionAtlas" id="Q9HCH0">
    <property type="expression patterns" value="baseline and differential"/>
</dbReference>
<dbReference type="GO" id="GO:0005813">
    <property type="term" value="C:centrosome"/>
    <property type="evidence" value="ECO:0000314"/>
    <property type="project" value="UniProtKB"/>
</dbReference>
<dbReference type="GO" id="GO:0005737">
    <property type="term" value="C:cytoplasm"/>
    <property type="evidence" value="ECO:0007669"/>
    <property type="project" value="UniProtKB-KW"/>
</dbReference>
<dbReference type="GO" id="GO:0035371">
    <property type="term" value="C:microtubule plus-end"/>
    <property type="evidence" value="ECO:0000314"/>
    <property type="project" value="UniProtKB"/>
</dbReference>
<dbReference type="GO" id="GO:0001578">
    <property type="term" value="P:microtubule bundle formation"/>
    <property type="evidence" value="ECO:0000314"/>
    <property type="project" value="UniProtKB"/>
</dbReference>
<dbReference type="GO" id="GO:0007019">
    <property type="term" value="P:microtubule depolymerization"/>
    <property type="evidence" value="ECO:0000315"/>
    <property type="project" value="UniProtKB"/>
</dbReference>
<dbReference type="InterPro" id="IPR032769">
    <property type="entry name" value="NCKAP5_C"/>
</dbReference>
<dbReference type="InterPro" id="IPR026163">
    <property type="entry name" value="Nckap5l"/>
</dbReference>
<dbReference type="PANTHER" id="PTHR21740">
    <property type="entry name" value="NCK-ASSOCIATED PROTEIN 5"/>
    <property type="match status" value="1"/>
</dbReference>
<dbReference type="PANTHER" id="PTHR21740:SF3">
    <property type="entry name" value="NCK-ASSOCIATED PROTEIN 5-LIKE"/>
    <property type="match status" value="1"/>
</dbReference>
<dbReference type="Pfam" id="PF15246">
    <property type="entry name" value="NCKAP5"/>
    <property type="match status" value="1"/>
</dbReference>